<dbReference type="EMBL" id="CP001176">
    <property type="protein sequence ID" value="ACK62492.1"/>
    <property type="molecule type" value="Genomic_DNA"/>
</dbReference>
<dbReference type="RefSeq" id="WP_000550078.1">
    <property type="nucleotide sequence ID" value="NZ_VEHB01000002.1"/>
</dbReference>
<dbReference type="SMR" id="B7HDV2"/>
<dbReference type="KEGG" id="bcb:BCB4264_A3927"/>
<dbReference type="HOGENOM" id="CLU_033123_0_0_9"/>
<dbReference type="Proteomes" id="UP000007096">
    <property type="component" value="Chromosome"/>
</dbReference>
<dbReference type="GO" id="GO:0009376">
    <property type="term" value="C:HslUV protease complex"/>
    <property type="evidence" value="ECO:0007669"/>
    <property type="project" value="UniProtKB-UniRule"/>
</dbReference>
<dbReference type="GO" id="GO:0005524">
    <property type="term" value="F:ATP binding"/>
    <property type="evidence" value="ECO:0007669"/>
    <property type="project" value="UniProtKB-UniRule"/>
</dbReference>
<dbReference type="GO" id="GO:0016887">
    <property type="term" value="F:ATP hydrolysis activity"/>
    <property type="evidence" value="ECO:0007669"/>
    <property type="project" value="InterPro"/>
</dbReference>
<dbReference type="GO" id="GO:0008233">
    <property type="term" value="F:peptidase activity"/>
    <property type="evidence" value="ECO:0007669"/>
    <property type="project" value="InterPro"/>
</dbReference>
<dbReference type="GO" id="GO:0036402">
    <property type="term" value="F:proteasome-activating activity"/>
    <property type="evidence" value="ECO:0007669"/>
    <property type="project" value="UniProtKB-UniRule"/>
</dbReference>
<dbReference type="GO" id="GO:0043335">
    <property type="term" value="P:protein unfolding"/>
    <property type="evidence" value="ECO:0007669"/>
    <property type="project" value="UniProtKB-UniRule"/>
</dbReference>
<dbReference type="GO" id="GO:0051603">
    <property type="term" value="P:proteolysis involved in protein catabolic process"/>
    <property type="evidence" value="ECO:0007669"/>
    <property type="project" value="TreeGrafter"/>
</dbReference>
<dbReference type="CDD" id="cd19498">
    <property type="entry name" value="RecA-like_HslU"/>
    <property type="match status" value="1"/>
</dbReference>
<dbReference type="FunFam" id="3.40.50.300:FF:000220">
    <property type="entry name" value="ATP-dependent protease ATPase subunit HslU"/>
    <property type="match status" value="1"/>
</dbReference>
<dbReference type="Gene3D" id="1.10.8.60">
    <property type="match status" value="1"/>
</dbReference>
<dbReference type="Gene3D" id="3.40.50.300">
    <property type="entry name" value="P-loop containing nucleotide triphosphate hydrolases"/>
    <property type="match status" value="2"/>
</dbReference>
<dbReference type="HAMAP" id="MF_00249">
    <property type="entry name" value="HslU"/>
    <property type="match status" value="1"/>
</dbReference>
<dbReference type="InterPro" id="IPR003593">
    <property type="entry name" value="AAA+_ATPase"/>
</dbReference>
<dbReference type="InterPro" id="IPR050052">
    <property type="entry name" value="ATP-dep_Clp_protease_ClpX"/>
</dbReference>
<dbReference type="InterPro" id="IPR003959">
    <property type="entry name" value="ATPase_AAA_core"/>
</dbReference>
<dbReference type="InterPro" id="IPR019489">
    <property type="entry name" value="Clp_ATPase_C"/>
</dbReference>
<dbReference type="InterPro" id="IPR004491">
    <property type="entry name" value="HslU"/>
</dbReference>
<dbReference type="InterPro" id="IPR027417">
    <property type="entry name" value="P-loop_NTPase"/>
</dbReference>
<dbReference type="NCBIfam" id="TIGR00390">
    <property type="entry name" value="hslU"/>
    <property type="match status" value="1"/>
</dbReference>
<dbReference type="NCBIfam" id="NF003544">
    <property type="entry name" value="PRK05201.1"/>
    <property type="match status" value="1"/>
</dbReference>
<dbReference type="PANTHER" id="PTHR48102">
    <property type="entry name" value="ATP-DEPENDENT CLP PROTEASE ATP-BINDING SUBUNIT CLPX-LIKE, MITOCHONDRIAL-RELATED"/>
    <property type="match status" value="1"/>
</dbReference>
<dbReference type="PANTHER" id="PTHR48102:SF3">
    <property type="entry name" value="ATP-DEPENDENT PROTEASE ATPASE SUBUNIT HSLU"/>
    <property type="match status" value="1"/>
</dbReference>
<dbReference type="Pfam" id="PF00004">
    <property type="entry name" value="AAA"/>
    <property type="match status" value="1"/>
</dbReference>
<dbReference type="Pfam" id="PF07724">
    <property type="entry name" value="AAA_2"/>
    <property type="match status" value="1"/>
</dbReference>
<dbReference type="Pfam" id="PF10431">
    <property type="entry name" value="ClpB_D2-small"/>
    <property type="match status" value="1"/>
</dbReference>
<dbReference type="SMART" id="SM00382">
    <property type="entry name" value="AAA"/>
    <property type="match status" value="1"/>
</dbReference>
<dbReference type="SMART" id="SM01086">
    <property type="entry name" value="ClpB_D2-small"/>
    <property type="match status" value="1"/>
</dbReference>
<dbReference type="SUPFAM" id="SSF52540">
    <property type="entry name" value="P-loop containing nucleoside triphosphate hydrolases"/>
    <property type="match status" value="1"/>
</dbReference>
<reference key="1">
    <citation type="submission" date="2008-10" db="EMBL/GenBank/DDBJ databases">
        <title>Genome sequence of Bacillus cereus B4264.</title>
        <authorList>
            <person name="Dodson R.J."/>
            <person name="Durkin A.S."/>
            <person name="Rosovitz M.J."/>
            <person name="Rasko D.A."/>
            <person name="Hoffmaster A."/>
            <person name="Ravel J."/>
            <person name="Sutton G."/>
        </authorList>
    </citation>
    <scope>NUCLEOTIDE SEQUENCE [LARGE SCALE GENOMIC DNA]</scope>
    <source>
        <strain>B4264</strain>
    </source>
</reference>
<evidence type="ECO:0000255" key="1">
    <source>
        <dbReference type="HAMAP-Rule" id="MF_00249"/>
    </source>
</evidence>
<keyword id="KW-0067">ATP-binding</keyword>
<keyword id="KW-0143">Chaperone</keyword>
<keyword id="KW-0963">Cytoplasm</keyword>
<keyword id="KW-0547">Nucleotide-binding</keyword>
<organism>
    <name type="scientific">Bacillus cereus (strain B4264)</name>
    <dbReference type="NCBI Taxonomy" id="405532"/>
    <lineage>
        <taxon>Bacteria</taxon>
        <taxon>Bacillati</taxon>
        <taxon>Bacillota</taxon>
        <taxon>Bacilli</taxon>
        <taxon>Bacillales</taxon>
        <taxon>Bacillaceae</taxon>
        <taxon>Bacillus</taxon>
        <taxon>Bacillus cereus group</taxon>
    </lineage>
</organism>
<protein>
    <recommendedName>
        <fullName evidence="1">ATP-dependent protease ATPase subunit HslU</fullName>
    </recommendedName>
    <alternativeName>
        <fullName evidence="1">Unfoldase HslU</fullName>
    </alternativeName>
</protein>
<proteinExistence type="inferred from homology"/>
<feature type="chain" id="PRO_1000189693" description="ATP-dependent protease ATPase subunit HslU">
    <location>
        <begin position="1"/>
        <end position="463"/>
    </location>
</feature>
<feature type="binding site" evidence="1">
    <location>
        <position position="19"/>
    </location>
    <ligand>
        <name>ATP</name>
        <dbReference type="ChEBI" id="CHEBI:30616"/>
    </ligand>
</feature>
<feature type="binding site" evidence="1">
    <location>
        <begin position="61"/>
        <end position="66"/>
    </location>
    <ligand>
        <name>ATP</name>
        <dbReference type="ChEBI" id="CHEBI:30616"/>
    </ligand>
</feature>
<feature type="binding site" evidence="1">
    <location>
        <position position="277"/>
    </location>
    <ligand>
        <name>ATP</name>
        <dbReference type="ChEBI" id="CHEBI:30616"/>
    </ligand>
</feature>
<feature type="binding site" evidence="1">
    <location>
        <position position="341"/>
    </location>
    <ligand>
        <name>ATP</name>
        <dbReference type="ChEBI" id="CHEBI:30616"/>
    </ligand>
</feature>
<feature type="binding site" evidence="1">
    <location>
        <position position="413"/>
    </location>
    <ligand>
        <name>ATP</name>
        <dbReference type="ChEBI" id="CHEBI:30616"/>
    </ligand>
</feature>
<sequence>MHLHFTPRQIVEKLDQYIIGQKDAKKAVAVALRNRYRRSKLAENLRDEIAPKNILMIGPTGVGKTEVARRMAKLVGAPFIKVEATKFTEVGYVGRDVESMVRDLVETSVRIVKEEMVVKVQDKAEEQANQRLVEILVPSPEKQSGFKNPLEMLFGGAQNSNQTSDTQEDVEIEKKRQDVERKLAAGLLEEEIVSIEVTEQQSSMFDMLQGTGMEQMGMNFQDALGSFMPKKTKKRKLSVKEARKLLTNEEAQRLIDMDEVTQEAVYRAEQLGIIFIDEIDKIAGKQSNSVDVSREGVQRDILPIVEGSNVATKYGSVKTDYILFVAAGAFHMSKPSDLIPELQGRFPIRVELTKLSTDDFVKILIEPDNALIKQYMALLATEGIEIEFSDEAIRKIAEIAYQVNQDTDNIGARRLHTIMEKLLEDLSFEASEITLEKITITPQYVEEKLATIAKNKDVSQFIL</sequence>
<accession>B7HDV2</accession>
<gene>
    <name evidence="1" type="primary">hslU</name>
    <name type="ordered locus">BCB4264_A3927</name>
</gene>
<comment type="function">
    <text evidence="1">ATPase subunit of a proteasome-like degradation complex; this subunit has chaperone activity. The binding of ATP and its subsequent hydrolysis by HslU are essential for unfolding of protein substrates subsequently hydrolyzed by HslV. HslU recognizes the N-terminal part of its protein substrates and unfolds these before they are guided to HslV for hydrolysis.</text>
</comment>
<comment type="subunit">
    <text evidence="1">A double ring-shaped homohexamer of HslV is capped on each side by a ring-shaped HslU homohexamer. The assembly of the HslU/HslV complex is dependent on binding of ATP.</text>
</comment>
<comment type="subcellular location">
    <subcellularLocation>
        <location evidence="1">Cytoplasm</location>
    </subcellularLocation>
</comment>
<comment type="similarity">
    <text evidence="1">Belongs to the ClpX chaperone family. HslU subfamily.</text>
</comment>
<name>HSLU_BACC4</name>